<reference key="1">
    <citation type="journal article" date="2006" name="Appl. Environ. Microbiol.">
        <title>Genome sequence of the chemolithoautotrophic nitrite-oxidizing bacterium Nitrobacter winogradskyi Nb-255.</title>
        <authorList>
            <person name="Starkenburg S.R."/>
            <person name="Chain P.S.G."/>
            <person name="Sayavedra-Soto L.A."/>
            <person name="Hauser L."/>
            <person name="Land M.L."/>
            <person name="Larimer F.W."/>
            <person name="Malfatti S.A."/>
            <person name="Klotz M.G."/>
            <person name="Bottomley P.J."/>
            <person name="Arp D.J."/>
            <person name="Hickey W.J."/>
        </authorList>
    </citation>
    <scope>NUCLEOTIDE SEQUENCE [LARGE SCALE GENOMIC DNA]</scope>
    <source>
        <strain>ATCC 25391 / DSM 10237 / CIP 104748 / NCIMB 11846 / Nb-255</strain>
    </source>
</reference>
<organism>
    <name type="scientific">Nitrobacter winogradskyi (strain ATCC 25391 / DSM 10237 / CIP 104748 / NCIMB 11846 / Nb-255)</name>
    <dbReference type="NCBI Taxonomy" id="323098"/>
    <lineage>
        <taxon>Bacteria</taxon>
        <taxon>Pseudomonadati</taxon>
        <taxon>Pseudomonadota</taxon>
        <taxon>Alphaproteobacteria</taxon>
        <taxon>Hyphomicrobiales</taxon>
        <taxon>Nitrobacteraceae</taxon>
        <taxon>Nitrobacter</taxon>
    </lineage>
</organism>
<name>ATPD_NITWN</name>
<gene>
    <name evidence="1" type="primary">atpH</name>
    <name type="ordered locus">Nwi_0429</name>
</gene>
<protein>
    <recommendedName>
        <fullName evidence="1">ATP synthase subunit delta</fullName>
    </recommendedName>
    <alternativeName>
        <fullName evidence="1">ATP synthase F(1) sector subunit delta</fullName>
    </alternativeName>
    <alternativeName>
        <fullName evidence="1">F-type ATPase subunit delta</fullName>
        <shortName evidence="1">F-ATPase subunit delta</shortName>
    </alternativeName>
</protein>
<feature type="chain" id="PRO_0000371038" description="ATP synthase subunit delta">
    <location>
        <begin position="1"/>
        <end position="186"/>
    </location>
</feature>
<dbReference type="EMBL" id="CP000115">
    <property type="protein sequence ID" value="ABA03696.1"/>
    <property type="status" value="ALT_INIT"/>
    <property type="molecule type" value="Genomic_DNA"/>
</dbReference>
<dbReference type="RefSeq" id="WP_011313760.1">
    <property type="nucleotide sequence ID" value="NC_007406.1"/>
</dbReference>
<dbReference type="SMR" id="Q3SVJ5"/>
<dbReference type="STRING" id="323098.Nwi_0429"/>
<dbReference type="KEGG" id="nwi:Nwi_0429"/>
<dbReference type="eggNOG" id="COG0712">
    <property type="taxonomic scope" value="Bacteria"/>
</dbReference>
<dbReference type="HOGENOM" id="CLU_085114_0_1_5"/>
<dbReference type="OrthoDB" id="9796185at2"/>
<dbReference type="Proteomes" id="UP000002531">
    <property type="component" value="Chromosome"/>
</dbReference>
<dbReference type="GO" id="GO:0005886">
    <property type="term" value="C:plasma membrane"/>
    <property type="evidence" value="ECO:0007669"/>
    <property type="project" value="UniProtKB-SubCell"/>
</dbReference>
<dbReference type="GO" id="GO:0045259">
    <property type="term" value="C:proton-transporting ATP synthase complex"/>
    <property type="evidence" value="ECO:0007669"/>
    <property type="project" value="UniProtKB-KW"/>
</dbReference>
<dbReference type="GO" id="GO:0046933">
    <property type="term" value="F:proton-transporting ATP synthase activity, rotational mechanism"/>
    <property type="evidence" value="ECO:0007669"/>
    <property type="project" value="UniProtKB-UniRule"/>
</dbReference>
<dbReference type="Gene3D" id="1.10.520.20">
    <property type="entry name" value="N-terminal domain of the delta subunit of the F1F0-ATP synthase"/>
    <property type="match status" value="1"/>
</dbReference>
<dbReference type="HAMAP" id="MF_01416">
    <property type="entry name" value="ATP_synth_delta_bact"/>
    <property type="match status" value="1"/>
</dbReference>
<dbReference type="InterPro" id="IPR026015">
    <property type="entry name" value="ATP_synth_OSCP/delta_N_sf"/>
</dbReference>
<dbReference type="InterPro" id="IPR020781">
    <property type="entry name" value="ATPase_OSCP/d_CS"/>
</dbReference>
<dbReference type="InterPro" id="IPR000711">
    <property type="entry name" value="ATPase_OSCP/dsu"/>
</dbReference>
<dbReference type="NCBIfam" id="TIGR01145">
    <property type="entry name" value="ATP_synt_delta"/>
    <property type="match status" value="1"/>
</dbReference>
<dbReference type="NCBIfam" id="NF004406">
    <property type="entry name" value="PRK05758.3-2"/>
    <property type="match status" value="1"/>
</dbReference>
<dbReference type="PANTHER" id="PTHR11910">
    <property type="entry name" value="ATP SYNTHASE DELTA CHAIN"/>
    <property type="match status" value="1"/>
</dbReference>
<dbReference type="Pfam" id="PF00213">
    <property type="entry name" value="OSCP"/>
    <property type="match status" value="1"/>
</dbReference>
<dbReference type="PRINTS" id="PR00125">
    <property type="entry name" value="ATPASEDELTA"/>
</dbReference>
<dbReference type="SUPFAM" id="SSF47928">
    <property type="entry name" value="N-terminal domain of the delta subunit of the F1F0-ATP synthase"/>
    <property type="match status" value="1"/>
</dbReference>
<dbReference type="PROSITE" id="PS00389">
    <property type="entry name" value="ATPASE_DELTA"/>
    <property type="match status" value="1"/>
</dbReference>
<keyword id="KW-0066">ATP synthesis</keyword>
<keyword id="KW-0997">Cell inner membrane</keyword>
<keyword id="KW-1003">Cell membrane</keyword>
<keyword id="KW-0139">CF(1)</keyword>
<keyword id="KW-0375">Hydrogen ion transport</keyword>
<keyword id="KW-0406">Ion transport</keyword>
<keyword id="KW-0472">Membrane</keyword>
<keyword id="KW-1185">Reference proteome</keyword>
<keyword id="KW-0813">Transport</keyword>
<evidence type="ECO:0000255" key="1">
    <source>
        <dbReference type="HAMAP-Rule" id="MF_01416"/>
    </source>
</evidence>
<evidence type="ECO:0000305" key="2"/>
<comment type="function">
    <text evidence="1">F(1)F(0) ATP synthase produces ATP from ADP in the presence of a proton or sodium gradient. F-type ATPases consist of two structural domains, F(1) containing the extramembraneous catalytic core and F(0) containing the membrane proton channel, linked together by a central stalk and a peripheral stalk. During catalysis, ATP synthesis in the catalytic domain of F(1) is coupled via a rotary mechanism of the central stalk subunits to proton translocation.</text>
</comment>
<comment type="function">
    <text evidence="1">This protein is part of the stalk that links CF(0) to CF(1). It either transmits conformational changes from CF(0) to CF(1) or is implicated in proton conduction.</text>
</comment>
<comment type="subunit">
    <text evidence="1">F-type ATPases have 2 components, F(1) - the catalytic core - and F(0) - the membrane proton channel. F(1) has five subunits: alpha(3), beta(3), gamma(1), delta(1), epsilon(1). F(0) has three main subunits: a(1), b(2) and c(10-14). The alpha and beta chains form an alternating ring which encloses part of the gamma chain. F(1) is attached to F(0) by a central stalk formed by the gamma and epsilon chains, while a peripheral stalk is formed by the delta and b chains.</text>
</comment>
<comment type="subcellular location">
    <subcellularLocation>
        <location evidence="1">Cell inner membrane</location>
        <topology evidence="1">Peripheral membrane protein</topology>
    </subcellularLocation>
</comment>
<comment type="similarity">
    <text evidence="1">Belongs to the ATPase delta chain family.</text>
</comment>
<comment type="sequence caution" evidence="2">
    <conflict type="erroneous initiation">
        <sequence resource="EMBL-CDS" id="ABA03696"/>
    </conflict>
</comment>
<proteinExistence type="inferred from homology"/>
<accession>Q3SVJ5</accession>
<sequence length="186" mass="19614">MAAVDPSVSGVSGRYATALFELAREDKSIDAVKADLDKFDAMLAESPELVRLVRSPVFSADTQSKALAAVLSKAGIGGTTANFLKVLAANRRLFAVADVIRAFRALVAKFKGEATAEVTVAEKLNDKNLDALKAALKSVTGKDITLNVKVDPSIIGGLVVKLGSRMVDTSLRTKLNSIKHAMKEAG</sequence>